<gene>
    <name evidence="8" type="primary">AA9B</name>
    <name type="ORF">BCIN_05g08230</name>
</gene>
<comment type="function">
    <text evidence="10">Lytic polysaccharide monooxygenase (LPMO) that depolymerizes crystalline and amorphous polysaccharides via the oxidation of scissile alpha- or beta-(1-4)-glycosidic bonds, yielding C1 and C4 oxidation products (Probable). Catalysis by LPMOs requires the reduction of the active-site copper from Cu(II) to Cu(I) by a reducing agent and H(2)O(2) or O(2) as a cosubstrate (Probable).</text>
</comment>
<comment type="catalytic activity">
    <reaction evidence="10">
        <text>[(1-&gt;4)-beta-D-glucosyl]n+m + reduced acceptor + O2 = 4-dehydro-beta-D-glucosyl-[(1-&gt;4)-beta-D-glucosyl]n-1 + [(1-&gt;4)-beta-D-glucosyl]m + acceptor + H2O.</text>
        <dbReference type="EC" id="1.14.99.56"/>
    </reaction>
</comment>
<comment type="cofactor">
    <cofactor evidence="10">
        <name>Cu(2+)</name>
        <dbReference type="ChEBI" id="CHEBI:29036"/>
    </cofactor>
    <text evidence="10">Binds 1 copper ion per subunit.</text>
</comment>
<comment type="subcellular location">
    <subcellularLocation>
        <location evidence="10">Secreted</location>
    </subcellularLocation>
</comment>
<comment type="induction">
    <text evidence="7">Expression is not induced in cellulose-inducible conditions (in Avicel- and wheat bran-containing complex medium).</text>
</comment>
<comment type="biotechnology">
    <text evidence="10">Lignocellulose is the most abundant polymeric composite on Earth and is a recalcitrant but promising renewable substrate for industrial biotechnology applications. Together with cellobiose dehydrogenases (CDHs) an enzymatic system capable of oxidative cellulose cleavage is formed, which increases the efficiency of cellulases and put LPMOs at focus of biofuel research.</text>
</comment>
<comment type="similarity">
    <text evidence="9">Belongs to the polysaccharide monooxygenase AA9 family.</text>
</comment>
<proteinExistence type="evidence at transcript level"/>
<name>LP9B_BOTFB</name>
<protein>
    <recommendedName>
        <fullName evidence="8">AA9 family lytic polysaccharide monooxygenase B</fullName>
        <shortName evidence="8">AA9B</shortName>
        <ecNumber evidence="10">1.14.99.56</ecNumber>
    </recommendedName>
    <alternativeName>
        <fullName evidence="9">Endo-1,4-beta-glucanase AA9B</fullName>
        <shortName evidence="9">Endoglucanase AA9B</shortName>
    </alternativeName>
    <alternativeName>
        <fullName evidence="9">Glycosyl hydrolase 61 family protein AA9B</fullName>
    </alternativeName>
</protein>
<reference key="1">
    <citation type="journal article" date="2011" name="PLoS Genet.">
        <title>Genomic analysis of the necrotrophic fungal pathogens Sclerotinia sclerotiorum and Botrytis cinerea.</title>
        <authorList>
            <person name="Amselem J."/>
            <person name="Cuomo C.A."/>
            <person name="van Kan J.A.L."/>
            <person name="Viaud M."/>
            <person name="Benito E.P."/>
            <person name="Couloux A."/>
            <person name="Coutinho P.M."/>
            <person name="de Vries R.P."/>
            <person name="Dyer P.S."/>
            <person name="Fillinger S."/>
            <person name="Fournier E."/>
            <person name="Gout L."/>
            <person name="Hahn M."/>
            <person name="Kohn L."/>
            <person name="Lapalu N."/>
            <person name="Plummer K.M."/>
            <person name="Pradier J.-M."/>
            <person name="Quevillon E."/>
            <person name="Sharon A."/>
            <person name="Simon A."/>
            <person name="ten Have A."/>
            <person name="Tudzynski B."/>
            <person name="Tudzynski P."/>
            <person name="Wincker P."/>
            <person name="Andrew M."/>
            <person name="Anthouard V."/>
            <person name="Beever R.E."/>
            <person name="Beffa R."/>
            <person name="Benoit I."/>
            <person name="Bouzid O."/>
            <person name="Brault B."/>
            <person name="Chen Z."/>
            <person name="Choquer M."/>
            <person name="Collemare J."/>
            <person name="Cotton P."/>
            <person name="Danchin E.G."/>
            <person name="Da Silva C."/>
            <person name="Gautier A."/>
            <person name="Giraud C."/>
            <person name="Giraud T."/>
            <person name="Gonzalez C."/>
            <person name="Grossetete S."/>
            <person name="Gueldener U."/>
            <person name="Henrissat B."/>
            <person name="Howlett B.J."/>
            <person name="Kodira C."/>
            <person name="Kretschmer M."/>
            <person name="Lappartient A."/>
            <person name="Leroch M."/>
            <person name="Levis C."/>
            <person name="Mauceli E."/>
            <person name="Neuveglise C."/>
            <person name="Oeser B."/>
            <person name="Pearson M."/>
            <person name="Poulain J."/>
            <person name="Poussereau N."/>
            <person name="Quesneville H."/>
            <person name="Rascle C."/>
            <person name="Schumacher J."/>
            <person name="Segurens B."/>
            <person name="Sexton A."/>
            <person name="Silva E."/>
            <person name="Sirven C."/>
            <person name="Soanes D.M."/>
            <person name="Talbot N.J."/>
            <person name="Templeton M."/>
            <person name="Yandava C."/>
            <person name="Yarden O."/>
            <person name="Zeng Q."/>
            <person name="Rollins J.A."/>
            <person name="Lebrun M.-H."/>
            <person name="Dickman M."/>
        </authorList>
    </citation>
    <scope>NUCLEOTIDE SEQUENCE [LARGE SCALE GENOMIC DNA]</scope>
    <source>
        <strain>B05.10</strain>
    </source>
</reference>
<reference key="2">
    <citation type="journal article" date="2012" name="Eukaryot. Cell">
        <title>Genome update of Botrytis cinerea strains B05.10 and T4.</title>
        <authorList>
            <person name="Staats M."/>
            <person name="van Kan J.A.L."/>
        </authorList>
    </citation>
    <scope>NUCLEOTIDE SEQUENCE [LARGE SCALE GENOMIC DNA]</scope>
    <source>
        <strain>B05.10</strain>
    </source>
</reference>
<reference key="3">
    <citation type="journal article" date="2017" name="Mol. Plant Pathol.">
        <title>A gapless genome sequence of the fungus Botrytis cinerea.</title>
        <authorList>
            <person name="van Kan J.A.L."/>
            <person name="Stassen J.H.M."/>
            <person name="Mosbach A."/>
            <person name="van der Lee T.A.J."/>
            <person name="Faino L."/>
            <person name="Farmer A.D."/>
            <person name="Papasotiriou D.G."/>
            <person name="Zhou S."/>
            <person name="Seidl M.F."/>
            <person name="Cottam E."/>
            <person name="Edel D."/>
            <person name="Hahn M."/>
            <person name="Schwartz D.C."/>
            <person name="Dietrich R.A."/>
            <person name="Widdison S."/>
            <person name="Scalliet G."/>
        </authorList>
    </citation>
    <scope>NUCLEOTIDE SEQUENCE [LARGE SCALE GENOMIC DNA]</scope>
    <source>
        <strain>B05.10</strain>
    </source>
</reference>
<reference key="4">
    <citation type="journal article" date="2022" name="Microbiol. Spectr.">
        <title>The Linker Region Promotes Activity and Binding Efficiency of Modular LPMO towards Polymeric Substrate.</title>
        <authorList>
            <person name="Srivastava A."/>
            <person name="Nagar P."/>
            <person name="Rathore S."/>
            <person name="Adlakha N."/>
        </authorList>
    </citation>
    <scope>IDENTIFICATION</scope>
    <scope>INDUCTION</scope>
    <scope>FUNCTION</scope>
</reference>
<keyword id="KW-0119">Carbohydrate metabolism</keyword>
<keyword id="KW-0136">Cellulose degradation</keyword>
<keyword id="KW-0186">Copper</keyword>
<keyword id="KW-1015">Disulfide bond</keyword>
<keyword id="KW-0325">Glycoprotein</keyword>
<keyword id="KW-0479">Metal-binding</keyword>
<keyword id="KW-0503">Monooxygenase</keyword>
<keyword id="KW-0560">Oxidoreductase</keyword>
<keyword id="KW-0624">Polysaccharide degradation</keyword>
<keyword id="KW-1185">Reference proteome</keyword>
<keyword id="KW-0964">Secreted</keyword>
<keyword id="KW-0732">Signal</keyword>
<sequence>MFSKSIIAASLLTAVTAHQNFHQFWVNGVSPGYQVSIRMPPSNSPVLDVASDNITCNVNGNVVPSGVNTTAANEGDAITVQWDSSTHPGPIQHYLFGPVDDASMATGIGSWFKIDEYIEVNGTWASNLMDAGNMSYTFNLPTGMASGEYLLRSEMLALHSAQTVGGAQWYIGCAQLSITGTSGDSCGPSIELPGDYNATDPSIYIPDIYYGFDISTYTPPGGAVATCGASGSGATGAASATAVATSAVSSAVASSSAAGVSSSAVVASSSVASSVLASSSAVLPSSSVAAIVTSAPSTLITATSAPAATSSAVEVGDDECEA</sequence>
<feature type="signal peptide" evidence="5">
    <location>
        <begin position="1"/>
        <end position="17"/>
    </location>
</feature>
<feature type="chain" id="PRO_5016682709" description="AA9 family lytic polysaccharide monooxygenase B" evidence="5">
    <location>
        <begin position="18"/>
        <end position="322"/>
    </location>
</feature>
<feature type="binding site" evidence="1">
    <location>
        <position position="18"/>
    </location>
    <ligand>
        <name>Cu(2+)</name>
        <dbReference type="ChEBI" id="CHEBI:29036"/>
    </ligand>
</feature>
<feature type="binding site" evidence="3">
    <location>
        <position position="87"/>
    </location>
    <ligand>
        <name>Cu(2+)</name>
        <dbReference type="ChEBI" id="CHEBI:29036"/>
    </ligand>
</feature>
<feature type="binding site" evidence="2">
    <location>
        <position position="159"/>
    </location>
    <ligand>
        <name>O2</name>
        <dbReference type="ChEBI" id="CHEBI:15379"/>
    </ligand>
</feature>
<feature type="binding site" evidence="2">
    <location>
        <position position="168"/>
    </location>
    <ligand>
        <name>O2</name>
        <dbReference type="ChEBI" id="CHEBI:15379"/>
    </ligand>
</feature>
<feature type="binding site" evidence="1">
    <location>
        <position position="170"/>
    </location>
    <ligand>
        <name>Cu(2+)</name>
        <dbReference type="ChEBI" id="CHEBI:29036"/>
    </ligand>
</feature>
<feature type="glycosylation site" description="N-linked (GlcNAc...) asparagine" evidence="6">
    <location>
        <position position="53"/>
    </location>
</feature>
<feature type="glycosylation site" description="N-linked (GlcNAc...) asparagine" evidence="6">
    <location>
        <position position="68"/>
    </location>
</feature>
<feature type="glycosylation site" description="N-linked (GlcNAc...) asparagine" evidence="6">
    <location>
        <position position="121"/>
    </location>
</feature>
<feature type="glycosylation site" description="N-linked (GlcNAc...) asparagine" evidence="6">
    <location>
        <position position="133"/>
    </location>
</feature>
<feature type="glycosylation site" description="N-linked (GlcNAc...) asparagine" evidence="6">
    <location>
        <position position="197"/>
    </location>
</feature>
<feature type="disulfide bond" evidence="4">
    <location>
        <begin position="56"/>
        <end position="173"/>
    </location>
</feature>
<evidence type="ECO:0000250" key="1">
    <source>
        <dbReference type="UniProtKB" id="G2R6N0"/>
    </source>
</evidence>
<evidence type="ECO:0000250" key="2">
    <source>
        <dbReference type="UniProtKB" id="Q1K8B6"/>
    </source>
</evidence>
<evidence type="ECO:0000250" key="3">
    <source>
        <dbReference type="UniProtKB" id="Q4WP32"/>
    </source>
</evidence>
<evidence type="ECO:0000250" key="4">
    <source>
        <dbReference type="UniProtKB" id="Q7Z9M7"/>
    </source>
</evidence>
<evidence type="ECO:0000255" key="5"/>
<evidence type="ECO:0000255" key="6">
    <source>
        <dbReference type="PROSITE-ProRule" id="PRU00498"/>
    </source>
</evidence>
<evidence type="ECO:0000269" key="7">
    <source>
    </source>
</evidence>
<evidence type="ECO:0000303" key="8">
    <source>
    </source>
</evidence>
<evidence type="ECO:0000305" key="9"/>
<evidence type="ECO:0000305" key="10">
    <source>
    </source>
</evidence>
<organism>
    <name type="scientific">Botryotinia fuckeliana (strain B05.10)</name>
    <name type="common">Noble rot fungus</name>
    <name type="synonym">Botrytis cinerea</name>
    <dbReference type="NCBI Taxonomy" id="332648"/>
    <lineage>
        <taxon>Eukaryota</taxon>
        <taxon>Fungi</taxon>
        <taxon>Dikarya</taxon>
        <taxon>Ascomycota</taxon>
        <taxon>Pezizomycotina</taxon>
        <taxon>Leotiomycetes</taxon>
        <taxon>Helotiales</taxon>
        <taxon>Sclerotiniaceae</taxon>
        <taxon>Botrytis</taxon>
    </lineage>
</organism>
<dbReference type="EC" id="1.14.99.56" evidence="10"/>
<dbReference type="EMBL" id="CP009809">
    <property type="protein sequence ID" value="ATZ50474.1"/>
    <property type="molecule type" value="Genomic_DNA"/>
</dbReference>
<dbReference type="RefSeq" id="XP_001548419.1">
    <property type="nucleotide sequence ID" value="XM_001548369.1"/>
</dbReference>
<dbReference type="SMR" id="A0A384JJE6"/>
<dbReference type="EnsemblFungi" id="Bcin05g08230.1">
    <property type="protein sequence ID" value="Bcin05p08230.1"/>
    <property type="gene ID" value="Bcin05g08230"/>
</dbReference>
<dbReference type="GeneID" id="5428904"/>
<dbReference type="KEGG" id="bfu:BCIN_05g08230"/>
<dbReference type="VEuPathDB" id="FungiDB:Bcin05g08230"/>
<dbReference type="OMA" id="DGKWANE"/>
<dbReference type="OrthoDB" id="4849160at2759"/>
<dbReference type="Proteomes" id="UP000001798">
    <property type="component" value="Chromosome bcin05"/>
</dbReference>
<dbReference type="GO" id="GO:0005576">
    <property type="term" value="C:extracellular region"/>
    <property type="evidence" value="ECO:0007669"/>
    <property type="project" value="UniProtKB-SubCell"/>
</dbReference>
<dbReference type="GO" id="GO:0046872">
    <property type="term" value="F:metal ion binding"/>
    <property type="evidence" value="ECO:0007669"/>
    <property type="project" value="UniProtKB-KW"/>
</dbReference>
<dbReference type="GO" id="GO:0004497">
    <property type="term" value="F:monooxygenase activity"/>
    <property type="evidence" value="ECO:0007669"/>
    <property type="project" value="UniProtKB-KW"/>
</dbReference>
<dbReference type="GO" id="GO:0030245">
    <property type="term" value="P:cellulose catabolic process"/>
    <property type="evidence" value="ECO:0007669"/>
    <property type="project" value="UniProtKB-KW"/>
</dbReference>
<dbReference type="CDD" id="cd21175">
    <property type="entry name" value="LPMO_AA9"/>
    <property type="match status" value="1"/>
</dbReference>
<dbReference type="Gene3D" id="2.70.50.70">
    <property type="match status" value="1"/>
</dbReference>
<dbReference type="InterPro" id="IPR049892">
    <property type="entry name" value="AA9"/>
</dbReference>
<dbReference type="InterPro" id="IPR005103">
    <property type="entry name" value="AA9_LPMO"/>
</dbReference>
<dbReference type="PANTHER" id="PTHR33353:SF1">
    <property type="entry name" value="ENDO-BETA-1,4-GLUCANASE D"/>
    <property type="match status" value="1"/>
</dbReference>
<dbReference type="PANTHER" id="PTHR33353">
    <property type="entry name" value="PUTATIVE (AFU_ORTHOLOGUE AFUA_1G12560)-RELATED"/>
    <property type="match status" value="1"/>
</dbReference>
<dbReference type="Pfam" id="PF03443">
    <property type="entry name" value="AA9"/>
    <property type="match status" value="1"/>
</dbReference>
<accession>A0A384JJE6</accession>